<sequence>MAKGIREKIKLVSSAGTGHFYTTTKNKRTKPEKMELKKYDPVVRQHVIYKEAKIK</sequence>
<feature type="chain" id="PRO_1000004174" description="Large ribosomal subunit protein bL33">
    <location>
        <begin position="1"/>
        <end position="55"/>
    </location>
</feature>
<organism>
    <name type="scientific">Klebsiella pneumoniae subsp. pneumoniae (strain ATCC 700721 / MGH 78578)</name>
    <dbReference type="NCBI Taxonomy" id="272620"/>
    <lineage>
        <taxon>Bacteria</taxon>
        <taxon>Pseudomonadati</taxon>
        <taxon>Pseudomonadota</taxon>
        <taxon>Gammaproteobacteria</taxon>
        <taxon>Enterobacterales</taxon>
        <taxon>Enterobacteriaceae</taxon>
        <taxon>Klebsiella/Raoultella group</taxon>
        <taxon>Klebsiella</taxon>
        <taxon>Klebsiella pneumoniae complex</taxon>
    </lineage>
</organism>
<proteinExistence type="inferred from homology"/>
<reference key="1">
    <citation type="submission" date="2006-09" db="EMBL/GenBank/DDBJ databases">
        <authorList>
            <consortium name="The Klebsiella pneumonia Genome Sequencing Project"/>
            <person name="McClelland M."/>
            <person name="Sanderson E.K."/>
            <person name="Spieth J."/>
            <person name="Clifton W.S."/>
            <person name="Latreille P."/>
            <person name="Sabo A."/>
            <person name="Pepin K."/>
            <person name="Bhonagiri V."/>
            <person name="Porwollik S."/>
            <person name="Ali J."/>
            <person name="Wilson R.K."/>
        </authorList>
    </citation>
    <scope>NUCLEOTIDE SEQUENCE [LARGE SCALE GENOMIC DNA]</scope>
    <source>
        <strain>ATCC 700721 / MGH 78578</strain>
    </source>
</reference>
<accession>A6TFM7</accession>
<dbReference type="EMBL" id="CP000647">
    <property type="protein sequence ID" value="ABR79361.1"/>
    <property type="molecule type" value="Genomic_DNA"/>
</dbReference>
<dbReference type="RefSeq" id="WP_002922510.1">
    <property type="nucleotide sequence ID" value="NC_009648.1"/>
</dbReference>
<dbReference type="SMR" id="A6TFM7"/>
<dbReference type="STRING" id="272620.KPN_03976"/>
<dbReference type="jPOST" id="A6TFM7"/>
<dbReference type="PaxDb" id="272620-KPN_03976"/>
<dbReference type="EnsemblBacteria" id="ABR79361">
    <property type="protein sequence ID" value="ABR79361"/>
    <property type="gene ID" value="KPN_03976"/>
</dbReference>
<dbReference type="GeneID" id="93314402"/>
<dbReference type="KEGG" id="kpn:KPN_03976"/>
<dbReference type="HOGENOM" id="CLU_190949_1_1_6"/>
<dbReference type="Proteomes" id="UP000000265">
    <property type="component" value="Chromosome"/>
</dbReference>
<dbReference type="GO" id="GO:0022625">
    <property type="term" value="C:cytosolic large ribosomal subunit"/>
    <property type="evidence" value="ECO:0007669"/>
    <property type="project" value="TreeGrafter"/>
</dbReference>
<dbReference type="GO" id="GO:0003735">
    <property type="term" value="F:structural constituent of ribosome"/>
    <property type="evidence" value="ECO:0007669"/>
    <property type="project" value="InterPro"/>
</dbReference>
<dbReference type="GO" id="GO:0006412">
    <property type="term" value="P:translation"/>
    <property type="evidence" value="ECO:0007669"/>
    <property type="project" value="UniProtKB-UniRule"/>
</dbReference>
<dbReference type="FunFam" id="2.20.28.120:FF:000001">
    <property type="entry name" value="50S ribosomal protein L33"/>
    <property type="match status" value="1"/>
</dbReference>
<dbReference type="Gene3D" id="2.20.28.120">
    <property type="entry name" value="Ribosomal protein L33"/>
    <property type="match status" value="1"/>
</dbReference>
<dbReference type="HAMAP" id="MF_00294">
    <property type="entry name" value="Ribosomal_bL33"/>
    <property type="match status" value="1"/>
</dbReference>
<dbReference type="InterPro" id="IPR001705">
    <property type="entry name" value="Ribosomal_bL33"/>
</dbReference>
<dbReference type="InterPro" id="IPR018264">
    <property type="entry name" value="Ribosomal_bL33_CS"/>
</dbReference>
<dbReference type="InterPro" id="IPR038584">
    <property type="entry name" value="Ribosomal_bL33_sf"/>
</dbReference>
<dbReference type="InterPro" id="IPR011332">
    <property type="entry name" value="Ribosomal_zn-bd"/>
</dbReference>
<dbReference type="NCBIfam" id="NF001860">
    <property type="entry name" value="PRK00595.1"/>
    <property type="match status" value="1"/>
</dbReference>
<dbReference type="NCBIfam" id="TIGR01023">
    <property type="entry name" value="rpmG_bact"/>
    <property type="match status" value="1"/>
</dbReference>
<dbReference type="PANTHER" id="PTHR15238">
    <property type="entry name" value="54S RIBOSOMAL PROTEIN L39, MITOCHONDRIAL"/>
    <property type="match status" value="1"/>
</dbReference>
<dbReference type="PANTHER" id="PTHR15238:SF1">
    <property type="entry name" value="LARGE RIBOSOMAL SUBUNIT PROTEIN BL33M"/>
    <property type="match status" value="1"/>
</dbReference>
<dbReference type="Pfam" id="PF00471">
    <property type="entry name" value="Ribosomal_L33"/>
    <property type="match status" value="1"/>
</dbReference>
<dbReference type="SUPFAM" id="SSF57829">
    <property type="entry name" value="Zn-binding ribosomal proteins"/>
    <property type="match status" value="1"/>
</dbReference>
<dbReference type="PROSITE" id="PS00582">
    <property type="entry name" value="RIBOSOMAL_L33"/>
    <property type="match status" value="1"/>
</dbReference>
<evidence type="ECO:0000255" key="1">
    <source>
        <dbReference type="HAMAP-Rule" id="MF_00294"/>
    </source>
</evidence>
<evidence type="ECO:0000305" key="2"/>
<protein>
    <recommendedName>
        <fullName evidence="1">Large ribosomal subunit protein bL33</fullName>
    </recommendedName>
    <alternativeName>
        <fullName evidence="2">50S ribosomal protein L33</fullName>
    </alternativeName>
</protein>
<comment type="similarity">
    <text evidence="1">Belongs to the bacterial ribosomal protein bL33 family.</text>
</comment>
<name>RL33_KLEP7</name>
<keyword id="KW-0687">Ribonucleoprotein</keyword>
<keyword id="KW-0689">Ribosomal protein</keyword>
<gene>
    <name evidence="1" type="primary">rpmG</name>
    <name type="ordered locus">KPN78578_39370</name>
    <name type="ORF">KPN_03976</name>
</gene>